<protein>
    <recommendedName>
        <fullName>Leptin</fullName>
    </recommendedName>
</protein>
<name>LEP_TETNG</name>
<organism>
    <name type="scientific">Tetraodon nigroviridis</name>
    <name type="common">Spotted green pufferfish</name>
    <name type="synonym">Chelonodon nigroviridis</name>
    <dbReference type="NCBI Taxonomy" id="99883"/>
    <lineage>
        <taxon>Eukaryota</taxon>
        <taxon>Metazoa</taxon>
        <taxon>Chordata</taxon>
        <taxon>Craniata</taxon>
        <taxon>Vertebrata</taxon>
        <taxon>Euteleostomi</taxon>
        <taxon>Actinopterygii</taxon>
        <taxon>Neopterygii</taxon>
        <taxon>Teleostei</taxon>
        <taxon>Neoteleostei</taxon>
        <taxon>Acanthomorphata</taxon>
        <taxon>Eupercaria</taxon>
        <taxon>Tetraodontiformes</taxon>
        <taxon>Tetradontoidea</taxon>
        <taxon>Tetraodontidae</taxon>
        <taxon>Tetraodon</taxon>
    </lineage>
</organism>
<comment type="function">
    <text evidence="1">May function as part of a signaling pathway that acts to regulate the size of the body fat depot.</text>
</comment>
<comment type="subcellular location">
    <subcellularLocation>
        <location evidence="3">Secreted</location>
    </subcellularLocation>
</comment>
<comment type="similarity">
    <text evidence="3">Belongs to the leptin family.</text>
</comment>
<dbReference type="EMBL" id="AB193549">
    <property type="protein sequence ID" value="BAD94451.1"/>
    <property type="molecule type" value="mRNA"/>
</dbReference>
<dbReference type="EMBL" id="CAAE01015035">
    <property type="status" value="NOT_ANNOTATED_CDS"/>
    <property type="molecule type" value="Genomic_DNA"/>
</dbReference>
<dbReference type="SMR" id="Q588F8"/>
<dbReference type="InParanoid" id="Q588F8"/>
<dbReference type="Proteomes" id="UP000007303">
    <property type="component" value="Unassembled WGS sequence"/>
</dbReference>
<dbReference type="GO" id="GO:0005576">
    <property type="term" value="C:extracellular region"/>
    <property type="evidence" value="ECO:0007669"/>
    <property type="project" value="UniProtKB-SubCell"/>
</dbReference>
<dbReference type="Gene3D" id="1.20.1250.10">
    <property type="match status" value="1"/>
</dbReference>
<dbReference type="InterPro" id="IPR009079">
    <property type="entry name" value="4_helix_cytokine-like_core"/>
</dbReference>
<dbReference type="SUPFAM" id="SSF47266">
    <property type="entry name" value="4-helical cytokines"/>
    <property type="match status" value="1"/>
</dbReference>
<evidence type="ECO:0000250" key="1"/>
<evidence type="ECO:0000255" key="2"/>
<evidence type="ECO:0000305" key="3"/>
<keyword id="KW-1015">Disulfide bond</keyword>
<keyword id="KW-0550">Obesity</keyword>
<keyword id="KW-1185">Reference proteome</keyword>
<keyword id="KW-0964">Secreted</keyword>
<keyword id="KW-0732">Signal</keyword>
<feature type="signal peptide" evidence="2">
    <location>
        <begin position="1"/>
        <end position="17"/>
    </location>
</feature>
<feature type="chain" id="PRO_0000042930" description="Leptin">
    <location>
        <begin position="18"/>
        <end position="160"/>
    </location>
</feature>
<feature type="disulfide bond" evidence="1">
    <location>
        <begin position="109"/>
        <end position="160"/>
    </location>
</feature>
<feature type="sequence conflict" description="In Ref. 1; BAD94451." evidence="3" ref="1">
    <original>N</original>
    <variation>K</variation>
    <location>
        <position position="102"/>
    </location>
</feature>
<proteinExistence type="evidence at transcript level"/>
<sequence length="160" mass="18260">MDYTLALALSLLQLSMCTPVPMMQDSGRMKTKAKWMVQQLLVRLKDNVWPHFDMPPTFSADDLEGSASIVARLENFNSLISDNLGDVLQIKAEISSLTGYLNNWRHNNCKEQRPRTAVPGLPQEPQRRKDFIQSVTIDALMSMKEFLNLLLQNLDHLEIC</sequence>
<reference key="1">
    <citation type="journal article" date="2005" name="Peptides">
        <title>Identification of cDNA coding for a homologue to mammalian leptin from pufferfish, Takifugu rubripes.</title>
        <authorList>
            <person name="Kurokawa T."/>
            <person name="Uji S."/>
            <person name="Suzuki T."/>
        </authorList>
    </citation>
    <scope>NUCLEOTIDE SEQUENCE [MRNA]</scope>
    <source>
        <tissue>Liver</tissue>
    </source>
</reference>
<reference key="2">
    <citation type="journal article" date="2004" name="Nature">
        <title>Genome duplication in the teleost fish Tetraodon nigroviridis reveals the early vertebrate proto-karyotype.</title>
        <authorList>
            <person name="Jaillon O."/>
            <person name="Aury J.-M."/>
            <person name="Brunet F."/>
            <person name="Petit J.-L."/>
            <person name="Stange-Thomann N."/>
            <person name="Mauceli E."/>
            <person name="Bouneau L."/>
            <person name="Fischer C."/>
            <person name="Ozouf-Costaz C."/>
            <person name="Bernot A."/>
            <person name="Nicaud S."/>
            <person name="Jaffe D."/>
            <person name="Fisher S."/>
            <person name="Lutfalla G."/>
            <person name="Dossat C."/>
            <person name="Segurens B."/>
            <person name="Dasilva C."/>
            <person name="Salanoubat M."/>
            <person name="Levy M."/>
            <person name="Boudet N."/>
            <person name="Castellano S."/>
            <person name="Anthouard V."/>
            <person name="Jubin C."/>
            <person name="Castelli V."/>
            <person name="Katinka M."/>
            <person name="Vacherie B."/>
            <person name="Biemont C."/>
            <person name="Skalli Z."/>
            <person name="Cattolico L."/>
            <person name="Poulain J."/>
            <person name="De Berardinis V."/>
            <person name="Cruaud C."/>
            <person name="Duprat S."/>
            <person name="Brottier P."/>
            <person name="Coutanceau J.-P."/>
            <person name="Gouzy J."/>
            <person name="Parra G."/>
            <person name="Lardier G."/>
            <person name="Chapple C."/>
            <person name="McKernan K.J."/>
            <person name="McEwan P."/>
            <person name="Bosak S."/>
            <person name="Kellis M."/>
            <person name="Volff J.-N."/>
            <person name="Guigo R."/>
            <person name="Zody M.C."/>
            <person name="Mesirov J."/>
            <person name="Lindblad-Toh K."/>
            <person name="Birren B."/>
            <person name="Nusbaum C."/>
            <person name="Kahn D."/>
            <person name="Robinson-Rechavi M."/>
            <person name="Laudet V."/>
            <person name="Schachter V."/>
            <person name="Quetier F."/>
            <person name="Saurin W."/>
            <person name="Scarpelli C."/>
            <person name="Wincker P."/>
            <person name="Lander E.S."/>
            <person name="Weissenbach J."/>
            <person name="Roest Crollius H."/>
        </authorList>
    </citation>
    <scope>NUCLEOTIDE SEQUENCE [LARGE SCALE GENOMIC DNA]</scope>
</reference>
<accession>Q588F8</accession>
<gene>
    <name type="primary">lep</name>
</gene>